<gene>
    <name evidence="1" type="primary">cpfC</name>
    <name type="ordered locus">SERP1367</name>
</gene>
<accession>Q5HNA5</accession>
<feature type="chain" id="PRO_0000175208" description="Coproporphyrin III ferrochelatase">
    <location>
        <begin position="1"/>
        <end position="307"/>
    </location>
</feature>
<feature type="binding site" description="axial binding residue" evidence="1">
    <location>
        <position position="12"/>
    </location>
    <ligand>
        <name>Fe-coproporphyrin III</name>
        <dbReference type="ChEBI" id="CHEBI:68438"/>
    </ligand>
    <ligandPart>
        <name>Fe</name>
        <dbReference type="ChEBI" id="CHEBI:18248"/>
    </ligandPart>
</feature>
<feature type="binding site" evidence="1">
    <location>
        <position position="29"/>
    </location>
    <ligand>
        <name>Fe-coproporphyrin III</name>
        <dbReference type="ChEBI" id="CHEBI:68438"/>
    </ligand>
</feature>
<feature type="binding site" evidence="1">
    <location>
        <begin position="45"/>
        <end position="46"/>
    </location>
    <ligand>
        <name>Fe-coproporphyrin III</name>
        <dbReference type="ChEBI" id="CHEBI:68438"/>
    </ligand>
</feature>
<feature type="binding site" evidence="1">
    <location>
        <position position="53"/>
    </location>
    <ligand>
        <name>Fe-coproporphyrin III</name>
        <dbReference type="ChEBI" id="CHEBI:68438"/>
    </ligand>
</feature>
<feature type="binding site" evidence="1">
    <location>
        <position position="124"/>
    </location>
    <ligand>
        <name>Fe-coproporphyrin III</name>
        <dbReference type="ChEBI" id="CHEBI:68438"/>
    </ligand>
</feature>
<feature type="binding site" evidence="1">
    <location>
        <position position="181"/>
    </location>
    <ligand>
        <name>Fe(2+)</name>
        <dbReference type="ChEBI" id="CHEBI:29033"/>
    </ligand>
</feature>
<feature type="binding site" evidence="1">
    <location>
        <position position="263"/>
    </location>
    <ligand>
        <name>Fe(2+)</name>
        <dbReference type="ChEBI" id="CHEBI:29033"/>
    </ligand>
</feature>
<name>CPFC_STAEQ</name>
<reference key="1">
    <citation type="journal article" date="2005" name="J. Bacteriol.">
        <title>Insights on evolution of virulence and resistance from the complete genome analysis of an early methicillin-resistant Staphylococcus aureus strain and a biofilm-producing methicillin-resistant Staphylococcus epidermidis strain.</title>
        <authorList>
            <person name="Gill S.R."/>
            <person name="Fouts D.E."/>
            <person name="Archer G.L."/>
            <person name="Mongodin E.F."/>
            <person name="DeBoy R.T."/>
            <person name="Ravel J."/>
            <person name="Paulsen I.T."/>
            <person name="Kolonay J.F."/>
            <person name="Brinkac L.M."/>
            <person name="Beanan M.J."/>
            <person name="Dodson R.J."/>
            <person name="Daugherty S.C."/>
            <person name="Madupu R."/>
            <person name="Angiuoli S.V."/>
            <person name="Durkin A.S."/>
            <person name="Haft D.H."/>
            <person name="Vamathevan J.J."/>
            <person name="Khouri H."/>
            <person name="Utterback T.R."/>
            <person name="Lee C."/>
            <person name="Dimitrov G."/>
            <person name="Jiang L."/>
            <person name="Qin H."/>
            <person name="Weidman J."/>
            <person name="Tran K."/>
            <person name="Kang K.H."/>
            <person name="Hance I.R."/>
            <person name="Nelson K.E."/>
            <person name="Fraser C.M."/>
        </authorList>
    </citation>
    <scope>NUCLEOTIDE SEQUENCE [LARGE SCALE GENOMIC DNA]</scope>
    <source>
        <strain>ATCC 35984 / DSM 28319 / BCRC 17069 / CCUG 31568 / BM 3577 / RP62A</strain>
    </source>
</reference>
<organism>
    <name type="scientific">Staphylococcus epidermidis (strain ATCC 35984 / DSM 28319 / BCRC 17069 / CCUG 31568 / BM 3577 / RP62A)</name>
    <dbReference type="NCBI Taxonomy" id="176279"/>
    <lineage>
        <taxon>Bacteria</taxon>
        <taxon>Bacillati</taxon>
        <taxon>Bacillota</taxon>
        <taxon>Bacilli</taxon>
        <taxon>Bacillales</taxon>
        <taxon>Staphylococcaceae</taxon>
        <taxon>Staphylococcus</taxon>
    </lineage>
</organism>
<comment type="function">
    <text evidence="1">Involved in coproporphyrin-dependent heme b biosynthesis. Catalyzes the insertion of ferrous iron into coproporphyrin III to form Fe-coproporphyrin III.</text>
</comment>
<comment type="catalytic activity">
    <reaction evidence="1">
        <text>Fe-coproporphyrin III + 2 H(+) = coproporphyrin III + Fe(2+)</text>
        <dbReference type="Rhea" id="RHEA:49572"/>
        <dbReference type="ChEBI" id="CHEBI:15378"/>
        <dbReference type="ChEBI" id="CHEBI:29033"/>
        <dbReference type="ChEBI" id="CHEBI:68438"/>
        <dbReference type="ChEBI" id="CHEBI:131725"/>
        <dbReference type="EC" id="4.99.1.9"/>
    </reaction>
    <physiologicalReaction direction="right-to-left" evidence="1">
        <dbReference type="Rhea" id="RHEA:49574"/>
    </physiologicalReaction>
</comment>
<comment type="pathway">
    <text evidence="1">Porphyrin-containing compound metabolism; protoheme biosynthesis.</text>
</comment>
<comment type="subcellular location">
    <subcellularLocation>
        <location evidence="1">Cytoplasm</location>
    </subcellularLocation>
</comment>
<comment type="similarity">
    <text evidence="1">Belongs to the ferrochelatase family.</text>
</comment>
<protein>
    <recommendedName>
        <fullName evidence="1">Coproporphyrin III ferrochelatase</fullName>
        <ecNumber evidence="1">4.99.1.9</ecNumber>
    </recommendedName>
</protein>
<sequence>MTKTIGLLVMAYGTPYKESDIEPYYTDIRRGKKPTEEELQDLKDRYEFIGGLSPLAGTTDRQAEALLEALNKEQDDVNFKLYLGLKHISPYIEEAVEQMHNDGIKEAVTVVLAPHYSSFSVGSYDQRAQEKADEYGIQLTHIKHYYQQPKFIKYWTEKINETLEQIPNQEHDETVLVVSAHSLPKGLIERNNDPYPHELHETAEILKQESNIIHVAEGWQSEGNTGTPWLGPDVQDLTRDLYKEHQFKHFIYTPVGFVCEHLEVLYDNDYECKVVCDDIGVNYYRPEMPNTHPLFIGAIVDEIQSHI</sequence>
<keyword id="KW-0963">Cytoplasm</keyword>
<keyword id="KW-0350">Heme biosynthesis</keyword>
<keyword id="KW-0408">Iron</keyword>
<keyword id="KW-0456">Lyase</keyword>
<keyword id="KW-0479">Metal-binding</keyword>
<keyword id="KW-0627">Porphyrin biosynthesis</keyword>
<keyword id="KW-1185">Reference proteome</keyword>
<dbReference type="EC" id="4.99.1.9" evidence="1"/>
<dbReference type="EMBL" id="CP000029">
    <property type="protein sequence ID" value="AAW54744.1"/>
    <property type="molecule type" value="Genomic_DNA"/>
</dbReference>
<dbReference type="SMR" id="Q5HNA5"/>
<dbReference type="STRING" id="176279.SERP1367"/>
<dbReference type="KEGG" id="ser:SERP1367"/>
<dbReference type="eggNOG" id="COG0276">
    <property type="taxonomic scope" value="Bacteria"/>
</dbReference>
<dbReference type="HOGENOM" id="CLU_018884_2_1_9"/>
<dbReference type="UniPathway" id="UPA00252"/>
<dbReference type="Proteomes" id="UP000000531">
    <property type="component" value="Chromosome"/>
</dbReference>
<dbReference type="GO" id="GO:0005737">
    <property type="term" value="C:cytoplasm"/>
    <property type="evidence" value="ECO:0007669"/>
    <property type="project" value="UniProtKB-SubCell"/>
</dbReference>
<dbReference type="GO" id="GO:0004325">
    <property type="term" value="F:ferrochelatase activity"/>
    <property type="evidence" value="ECO:0007669"/>
    <property type="project" value="UniProtKB-UniRule"/>
</dbReference>
<dbReference type="GO" id="GO:0046872">
    <property type="term" value="F:metal ion binding"/>
    <property type="evidence" value="ECO:0007669"/>
    <property type="project" value="UniProtKB-KW"/>
</dbReference>
<dbReference type="GO" id="GO:0006783">
    <property type="term" value="P:heme biosynthetic process"/>
    <property type="evidence" value="ECO:0007669"/>
    <property type="project" value="UniProtKB-UniRule"/>
</dbReference>
<dbReference type="CDD" id="cd00419">
    <property type="entry name" value="Ferrochelatase_C"/>
    <property type="match status" value="1"/>
</dbReference>
<dbReference type="CDD" id="cd03411">
    <property type="entry name" value="Ferrochelatase_N"/>
    <property type="match status" value="1"/>
</dbReference>
<dbReference type="FunFam" id="3.40.50.1400:FF:000009">
    <property type="entry name" value="Ferrochelatase"/>
    <property type="match status" value="1"/>
</dbReference>
<dbReference type="Gene3D" id="3.40.50.1400">
    <property type="match status" value="2"/>
</dbReference>
<dbReference type="HAMAP" id="MF_00323">
    <property type="entry name" value="Ferrochelatase"/>
    <property type="match status" value="1"/>
</dbReference>
<dbReference type="InterPro" id="IPR001015">
    <property type="entry name" value="Ferrochelatase"/>
</dbReference>
<dbReference type="InterPro" id="IPR019772">
    <property type="entry name" value="Ferrochelatase_AS"/>
</dbReference>
<dbReference type="InterPro" id="IPR033644">
    <property type="entry name" value="Ferrochelatase_C"/>
</dbReference>
<dbReference type="InterPro" id="IPR033659">
    <property type="entry name" value="Ferrochelatase_N"/>
</dbReference>
<dbReference type="NCBIfam" id="TIGR00109">
    <property type="entry name" value="hemH"/>
    <property type="match status" value="1"/>
</dbReference>
<dbReference type="NCBIfam" id="NF009095">
    <property type="entry name" value="PRK12435.1"/>
    <property type="match status" value="1"/>
</dbReference>
<dbReference type="PANTHER" id="PTHR11108">
    <property type="entry name" value="FERROCHELATASE"/>
    <property type="match status" value="1"/>
</dbReference>
<dbReference type="PANTHER" id="PTHR11108:SF1">
    <property type="entry name" value="FERROCHELATASE, MITOCHONDRIAL"/>
    <property type="match status" value="1"/>
</dbReference>
<dbReference type="Pfam" id="PF00762">
    <property type="entry name" value="Ferrochelatase"/>
    <property type="match status" value="1"/>
</dbReference>
<dbReference type="SUPFAM" id="SSF53800">
    <property type="entry name" value="Chelatase"/>
    <property type="match status" value="1"/>
</dbReference>
<dbReference type="PROSITE" id="PS00534">
    <property type="entry name" value="FERROCHELATASE"/>
    <property type="match status" value="1"/>
</dbReference>
<evidence type="ECO:0000255" key="1">
    <source>
        <dbReference type="HAMAP-Rule" id="MF_00323"/>
    </source>
</evidence>
<proteinExistence type="inferred from homology"/>